<keyword id="KW-0963">Cytoplasm</keyword>
<keyword id="KW-0521">NADP</keyword>
<keyword id="KW-0560">Oxidoreductase</keyword>
<keyword id="KW-0671">Queuosine biosynthesis</keyword>
<keyword id="KW-1185">Reference proteome</keyword>
<dbReference type="EC" id="1.7.1.13" evidence="1"/>
<dbReference type="EMBL" id="CP000316">
    <property type="protein sequence ID" value="ABE45610.1"/>
    <property type="molecule type" value="Genomic_DNA"/>
</dbReference>
<dbReference type="RefSeq" id="WP_011484601.1">
    <property type="nucleotide sequence ID" value="NC_007948.1"/>
</dbReference>
<dbReference type="SMR" id="Q126D2"/>
<dbReference type="STRING" id="296591.Bpro_3710"/>
<dbReference type="KEGG" id="pol:Bpro_3710"/>
<dbReference type="eggNOG" id="COG0780">
    <property type="taxonomic scope" value="Bacteria"/>
</dbReference>
<dbReference type="eggNOG" id="COG2904">
    <property type="taxonomic scope" value="Bacteria"/>
</dbReference>
<dbReference type="HOGENOM" id="CLU_054738_0_0_4"/>
<dbReference type="OrthoDB" id="9789995at2"/>
<dbReference type="UniPathway" id="UPA00392"/>
<dbReference type="Proteomes" id="UP000001983">
    <property type="component" value="Chromosome"/>
</dbReference>
<dbReference type="GO" id="GO:0005737">
    <property type="term" value="C:cytoplasm"/>
    <property type="evidence" value="ECO:0007669"/>
    <property type="project" value="UniProtKB-SubCell"/>
</dbReference>
<dbReference type="GO" id="GO:0033739">
    <property type="term" value="F:preQ1 synthase activity"/>
    <property type="evidence" value="ECO:0007669"/>
    <property type="project" value="UniProtKB-UniRule"/>
</dbReference>
<dbReference type="GO" id="GO:0008616">
    <property type="term" value="P:queuosine biosynthetic process"/>
    <property type="evidence" value="ECO:0007669"/>
    <property type="project" value="UniProtKB-UniRule"/>
</dbReference>
<dbReference type="GO" id="GO:0006400">
    <property type="term" value="P:tRNA modification"/>
    <property type="evidence" value="ECO:0007669"/>
    <property type="project" value="UniProtKB-UniRule"/>
</dbReference>
<dbReference type="Gene3D" id="3.30.1130.10">
    <property type="match status" value="2"/>
</dbReference>
<dbReference type="HAMAP" id="MF_00817">
    <property type="entry name" value="QueF_type2"/>
    <property type="match status" value="1"/>
</dbReference>
<dbReference type="InterPro" id="IPR043133">
    <property type="entry name" value="GTP-CH-I_C/QueF"/>
</dbReference>
<dbReference type="InterPro" id="IPR050084">
    <property type="entry name" value="NADPH_dep_7-cyano-7-deazaG_red"/>
</dbReference>
<dbReference type="InterPro" id="IPR029500">
    <property type="entry name" value="QueF"/>
</dbReference>
<dbReference type="InterPro" id="IPR029139">
    <property type="entry name" value="QueF_N"/>
</dbReference>
<dbReference type="InterPro" id="IPR016428">
    <property type="entry name" value="QueF_type2"/>
</dbReference>
<dbReference type="NCBIfam" id="TIGR03138">
    <property type="entry name" value="QueF"/>
    <property type="match status" value="1"/>
</dbReference>
<dbReference type="PANTHER" id="PTHR34354">
    <property type="entry name" value="NADPH-DEPENDENT 7-CYANO-7-DEAZAGUANINE REDUCTASE"/>
    <property type="match status" value="1"/>
</dbReference>
<dbReference type="PANTHER" id="PTHR34354:SF1">
    <property type="entry name" value="NADPH-DEPENDENT 7-CYANO-7-DEAZAGUANINE REDUCTASE"/>
    <property type="match status" value="1"/>
</dbReference>
<dbReference type="Pfam" id="PF14489">
    <property type="entry name" value="QueF"/>
    <property type="match status" value="1"/>
</dbReference>
<dbReference type="Pfam" id="PF14819">
    <property type="entry name" value="QueF_N"/>
    <property type="match status" value="1"/>
</dbReference>
<dbReference type="PIRSF" id="PIRSF004750">
    <property type="entry name" value="Nitrile_oxidored_YqcD_prd"/>
    <property type="match status" value="1"/>
</dbReference>
<dbReference type="SUPFAM" id="SSF55620">
    <property type="entry name" value="Tetrahydrobiopterin biosynthesis enzymes-like"/>
    <property type="match status" value="1"/>
</dbReference>
<organism>
    <name type="scientific">Polaromonas sp. (strain JS666 / ATCC BAA-500)</name>
    <dbReference type="NCBI Taxonomy" id="296591"/>
    <lineage>
        <taxon>Bacteria</taxon>
        <taxon>Pseudomonadati</taxon>
        <taxon>Pseudomonadota</taxon>
        <taxon>Betaproteobacteria</taxon>
        <taxon>Burkholderiales</taxon>
        <taxon>Comamonadaceae</taxon>
        <taxon>Polaromonas</taxon>
    </lineage>
</organism>
<protein>
    <recommendedName>
        <fullName evidence="1">NADPH-dependent 7-cyano-7-deazaguanine reductase</fullName>
        <ecNumber evidence="1">1.7.1.13</ecNumber>
    </recommendedName>
    <alternativeName>
        <fullName evidence="1">7-cyano-7-carbaguanine reductase</fullName>
    </alternativeName>
    <alternativeName>
        <fullName evidence="1">NADPH-dependent nitrile oxidoreductase</fullName>
    </alternativeName>
    <alternativeName>
        <fullName evidence="1">PreQ(0) reductase</fullName>
    </alternativeName>
</protein>
<gene>
    <name evidence="1" type="primary">queF</name>
    <name type="ordered locus">Bpro_3710</name>
</gene>
<reference key="1">
    <citation type="journal article" date="2008" name="Appl. Environ. Microbiol.">
        <title>The genome of Polaromonas sp. strain JS666: insights into the evolution of a hydrocarbon- and xenobiotic-degrading bacterium, and features of relevance to biotechnology.</title>
        <authorList>
            <person name="Mattes T.E."/>
            <person name="Alexander A.K."/>
            <person name="Richardson P.M."/>
            <person name="Munk A.C."/>
            <person name="Han C.S."/>
            <person name="Stothard P."/>
            <person name="Coleman N.V."/>
        </authorList>
    </citation>
    <scope>NUCLEOTIDE SEQUENCE [LARGE SCALE GENOMIC DNA]</scope>
    <source>
        <strain>JS666 / ATCC BAA-500</strain>
    </source>
</reference>
<proteinExistence type="inferred from homology"/>
<evidence type="ECO:0000255" key="1">
    <source>
        <dbReference type="HAMAP-Rule" id="MF_00817"/>
    </source>
</evidence>
<sequence length="275" mass="31053">MNTPEHSQLGKSSAYVDQYDASLLFPIPRAEKRAEIGVTGTPPFFGADMWTAFELSWLNMRGKPQVALAHITVPCESPNIVESKSFKLYLNSFNNTRFSDARDVRERIRADINAAVGAGVGVKTLGPELFDREPVHELDGLSLDRLDVECIHFTPAPELLFAEFDEPPVDETLTSNLLKSNCLVTGQPDWGSVQISYSGPQINQEGLLQYLVSFRNHNEFHEQCVERIFMDVWTRCRPLKLSVYARYTRRGGLDINPFRTSHPQALPANIRMARQ</sequence>
<accession>Q126D2</accession>
<feature type="chain" id="PRO_1000062349" description="NADPH-dependent 7-cyano-7-deazaguanine reductase">
    <location>
        <begin position="1"/>
        <end position="275"/>
    </location>
</feature>
<feature type="active site" description="Thioimide intermediate" evidence="1">
    <location>
        <position position="182"/>
    </location>
</feature>
<feature type="active site" description="Proton donor" evidence="1">
    <location>
        <position position="189"/>
    </location>
</feature>
<feature type="binding site" evidence="1">
    <location>
        <begin position="81"/>
        <end position="83"/>
    </location>
    <ligand>
        <name>substrate</name>
    </ligand>
</feature>
<feature type="binding site" evidence="1">
    <location>
        <begin position="83"/>
        <end position="84"/>
    </location>
    <ligand>
        <name>NADPH</name>
        <dbReference type="ChEBI" id="CHEBI:57783"/>
    </ligand>
</feature>
<feature type="binding site" evidence="1">
    <location>
        <begin position="221"/>
        <end position="222"/>
    </location>
    <ligand>
        <name>substrate</name>
    </ligand>
</feature>
<feature type="binding site" evidence="1">
    <location>
        <begin position="250"/>
        <end position="251"/>
    </location>
    <ligand>
        <name>NADPH</name>
        <dbReference type="ChEBI" id="CHEBI:57783"/>
    </ligand>
</feature>
<comment type="function">
    <text evidence="1">Catalyzes the NADPH-dependent reduction of 7-cyano-7-deazaguanine (preQ0) to 7-aminomethyl-7-deazaguanine (preQ1).</text>
</comment>
<comment type="catalytic activity">
    <reaction evidence="1">
        <text>7-aminomethyl-7-carbaguanine + 2 NADP(+) = 7-cyano-7-deazaguanine + 2 NADPH + 3 H(+)</text>
        <dbReference type="Rhea" id="RHEA:13409"/>
        <dbReference type="ChEBI" id="CHEBI:15378"/>
        <dbReference type="ChEBI" id="CHEBI:45075"/>
        <dbReference type="ChEBI" id="CHEBI:57783"/>
        <dbReference type="ChEBI" id="CHEBI:58349"/>
        <dbReference type="ChEBI" id="CHEBI:58703"/>
        <dbReference type="EC" id="1.7.1.13"/>
    </reaction>
</comment>
<comment type="pathway">
    <text evidence="1">tRNA modification; tRNA-queuosine biosynthesis.</text>
</comment>
<comment type="subunit">
    <text evidence="1">Homodimer.</text>
</comment>
<comment type="subcellular location">
    <subcellularLocation>
        <location evidence="1">Cytoplasm</location>
    </subcellularLocation>
</comment>
<comment type="similarity">
    <text evidence="1">Belongs to the GTP cyclohydrolase I family. QueF type 2 subfamily.</text>
</comment>
<name>QUEF_POLSJ</name>